<comment type="function">
    <text evidence="1">Catalyzes the condensation reaction of fatty acid synthesis by the addition to an acyl acceptor of two carbons from malonyl-ACP. Catalyzes the first condensation reaction which initiates fatty acid synthesis and may therefore play a role in governing the total rate of fatty acid production. Possesses both acetoacetyl-ACP synthase and acetyl transacylase activities. Its substrate specificity determines the biosynthesis of branched-chain and/or straight-chain of fatty acids.</text>
</comment>
<comment type="catalytic activity">
    <reaction evidence="1">
        <text>malonyl-[ACP] + acetyl-CoA + H(+) = 3-oxobutanoyl-[ACP] + CO2 + CoA</text>
        <dbReference type="Rhea" id="RHEA:12080"/>
        <dbReference type="Rhea" id="RHEA-COMP:9623"/>
        <dbReference type="Rhea" id="RHEA-COMP:9625"/>
        <dbReference type="ChEBI" id="CHEBI:15378"/>
        <dbReference type="ChEBI" id="CHEBI:16526"/>
        <dbReference type="ChEBI" id="CHEBI:57287"/>
        <dbReference type="ChEBI" id="CHEBI:57288"/>
        <dbReference type="ChEBI" id="CHEBI:78449"/>
        <dbReference type="ChEBI" id="CHEBI:78450"/>
        <dbReference type="EC" id="2.3.1.180"/>
    </reaction>
</comment>
<comment type="pathway">
    <text evidence="1">Lipid metabolism; fatty acid biosynthesis.</text>
</comment>
<comment type="subunit">
    <text evidence="1">Homodimer.</text>
</comment>
<comment type="subcellular location">
    <subcellularLocation>
        <location evidence="1">Cytoplasm</location>
    </subcellularLocation>
</comment>
<comment type="domain">
    <text evidence="1">The last Arg residue of the ACP-binding site is essential for the weak association between ACP/AcpP and FabH.</text>
</comment>
<comment type="similarity">
    <text evidence="1">Belongs to the thiolase-like superfamily. FabH family.</text>
</comment>
<reference key="1">
    <citation type="journal article" date="2008" name="PLoS ONE">
        <title>Genome sequence of Brucella abortus vaccine strain S19 compared to virulent strains yields candidate virulence genes.</title>
        <authorList>
            <person name="Crasta O.R."/>
            <person name="Folkerts O."/>
            <person name="Fei Z."/>
            <person name="Mane S.P."/>
            <person name="Evans C."/>
            <person name="Martino-Catt S."/>
            <person name="Bricker B."/>
            <person name="Yu G."/>
            <person name="Du L."/>
            <person name="Sobral B.W."/>
        </authorList>
    </citation>
    <scope>NUCLEOTIDE SEQUENCE [LARGE SCALE GENOMIC DNA]</scope>
    <source>
        <strain>S19</strain>
    </source>
</reference>
<feature type="chain" id="PRO_1000187846" description="Beta-ketoacyl-[acyl-carrier-protein] synthase III">
    <location>
        <begin position="1"/>
        <end position="323"/>
    </location>
</feature>
<feature type="region of interest" description="ACP-binding" evidence="1">
    <location>
        <begin position="251"/>
        <end position="255"/>
    </location>
</feature>
<feature type="active site" evidence="1">
    <location>
        <position position="113"/>
    </location>
</feature>
<feature type="active site" evidence="1">
    <location>
        <position position="250"/>
    </location>
</feature>
<feature type="active site" evidence="1">
    <location>
        <position position="280"/>
    </location>
</feature>
<keyword id="KW-0012">Acyltransferase</keyword>
<keyword id="KW-0963">Cytoplasm</keyword>
<keyword id="KW-0275">Fatty acid biosynthesis</keyword>
<keyword id="KW-0276">Fatty acid metabolism</keyword>
<keyword id="KW-0444">Lipid biosynthesis</keyword>
<keyword id="KW-0443">Lipid metabolism</keyword>
<keyword id="KW-0511">Multifunctional enzyme</keyword>
<keyword id="KW-0808">Transferase</keyword>
<proteinExistence type="inferred from homology"/>
<dbReference type="EC" id="2.3.1.180" evidence="1"/>
<dbReference type="EMBL" id="CP000887">
    <property type="protein sequence ID" value="ACD72271.1"/>
    <property type="molecule type" value="Genomic_DNA"/>
</dbReference>
<dbReference type="RefSeq" id="WP_002963913.1">
    <property type="nucleotide sequence ID" value="NC_010742.1"/>
</dbReference>
<dbReference type="SMR" id="B2S524"/>
<dbReference type="KEGG" id="bmc:BAbS19_I07470"/>
<dbReference type="HOGENOM" id="CLU_039592_3_1_5"/>
<dbReference type="UniPathway" id="UPA00094"/>
<dbReference type="Proteomes" id="UP000002565">
    <property type="component" value="Chromosome 1"/>
</dbReference>
<dbReference type="GO" id="GO:0005737">
    <property type="term" value="C:cytoplasm"/>
    <property type="evidence" value="ECO:0007669"/>
    <property type="project" value="UniProtKB-SubCell"/>
</dbReference>
<dbReference type="GO" id="GO:0004315">
    <property type="term" value="F:3-oxoacyl-[acyl-carrier-protein] synthase activity"/>
    <property type="evidence" value="ECO:0007669"/>
    <property type="project" value="InterPro"/>
</dbReference>
<dbReference type="GO" id="GO:0033818">
    <property type="term" value="F:beta-ketoacyl-acyl-carrier-protein synthase III activity"/>
    <property type="evidence" value="ECO:0007669"/>
    <property type="project" value="UniProtKB-UniRule"/>
</dbReference>
<dbReference type="GO" id="GO:0006633">
    <property type="term" value="P:fatty acid biosynthetic process"/>
    <property type="evidence" value="ECO:0007669"/>
    <property type="project" value="UniProtKB-UniRule"/>
</dbReference>
<dbReference type="CDD" id="cd00830">
    <property type="entry name" value="KAS_III"/>
    <property type="match status" value="1"/>
</dbReference>
<dbReference type="FunFam" id="3.40.47.10:FF:000004">
    <property type="entry name" value="3-oxoacyl-[acyl-carrier-protein] synthase 3"/>
    <property type="match status" value="1"/>
</dbReference>
<dbReference type="Gene3D" id="3.40.47.10">
    <property type="match status" value="1"/>
</dbReference>
<dbReference type="HAMAP" id="MF_01815">
    <property type="entry name" value="FabH"/>
    <property type="match status" value="1"/>
</dbReference>
<dbReference type="InterPro" id="IPR013747">
    <property type="entry name" value="ACP_syn_III_C"/>
</dbReference>
<dbReference type="InterPro" id="IPR013751">
    <property type="entry name" value="ACP_syn_III_N"/>
</dbReference>
<dbReference type="InterPro" id="IPR004655">
    <property type="entry name" value="FabH"/>
</dbReference>
<dbReference type="InterPro" id="IPR016039">
    <property type="entry name" value="Thiolase-like"/>
</dbReference>
<dbReference type="NCBIfam" id="TIGR00747">
    <property type="entry name" value="fabH"/>
    <property type="match status" value="1"/>
</dbReference>
<dbReference type="NCBIfam" id="NF006829">
    <property type="entry name" value="PRK09352.1"/>
    <property type="match status" value="1"/>
</dbReference>
<dbReference type="PANTHER" id="PTHR43091">
    <property type="entry name" value="3-OXOACYL-[ACYL-CARRIER-PROTEIN] SYNTHASE"/>
    <property type="match status" value="1"/>
</dbReference>
<dbReference type="PANTHER" id="PTHR43091:SF1">
    <property type="entry name" value="BETA-KETOACYL-[ACYL-CARRIER-PROTEIN] SYNTHASE III, CHLOROPLASTIC"/>
    <property type="match status" value="1"/>
</dbReference>
<dbReference type="Pfam" id="PF08545">
    <property type="entry name" value="ACP_syn_III"/>
    <property type="match status" value="1"/>
</dbReference>
<dbReference type="Pfam" id="PF08541">
    <property type="entry name" value="ACP_syn_III_C"/>
    <property type="match status" value="1"/>
</dbReference>
<dbReference type="SUPFAM" id="SSF53901">
    <property type="entry name" value="Thiolase-like"/>
    <property type="match status" value="1"/>
</dbReference>
<gene>
    <name evidence="1" type="primary">fabH</name>
    <name type="ordered locus">BAbS19_I07470</name>
</gene>
<name>FABH_BRUA1</name>
<sequence length="323" mass="34448">MIRSVVRGIGSALPKRVMKNTDFEGIVETSDEWIVQRTGIRERHIAGEGETTVSLGAAAARAAIENAGLQPSDIDLVLLATSTPNNTFPASAVAIQRELGITRGFAFDLQAVCSGFIYAITTADLYIRGGMARRVLVIGAETFSRILDWTDRTTCVLFGDGAGAIVLEAAEGHGLTSDRGILAANLRSDGNHKEKLYVDGGPSTTQTVGHLRMEGREVFKHAVGMITDVIEASFEATGLTAEDIDWFVPHQANKRIIDASAKKLHIAEEKVVITVDRHGNTSAASVPLALATAVADGRIKKGDLVLLEAMGGGFTWGAVLVRW</sequence>
<accession>B2S524</accession>
<evidence type="ECO:0000255" key="1">
    <source>
        <dbReference type="HAMAP-Rule" id="MF_01815"/>
    </source>
</evidence>
<protein>
    <recommendedName>
        <fullName evidence="1">Beta-ketoacyl-[acyl-carrier-protein] synthase III</fullName>
        <shortName evidence="1">Beta-ketoacyl-ACP synthase III</shortName>
        <shortName evidence="1">KAS III</shortName>
        <ecNumber evidence="1">2.3.1.180</ecNumber>
    </recommendedName>
    <alternativeName>
        <fullName evidence="1">3-oxoacyl-[acyl-carrier-protein] synthase 3</fullName>
    </alternativeName>
    <alternativeName>
        <fullName evidence="1">3-oxoacyl-[acyl-carrier-protein] synthase III</fullName>
    </alternativeName>
</protein>
<organism>
    <name type="scientific">Brucella abortus (strain S19)</name>
    <dbReference type="NCBI Taxonomy" id="430066"/>
    <lineage>
        <taxon>Bacteria</taxon>
        <taxon>Pseudomonadati</taxon>
        <taxon>Pseudomonadota</taxon>
        <taxon>Alphaproteobacteria</taxon>
        <taxon>Hyphomicrobiales</taxon>
        <taxon>Brucellaceae</taxon>
        <taxon>Brucella/Ochrobactrum group</taxon>
        <taxon>Brucella</taxon>
    </lineage>
</organism>